<gene>
    <name evidence="1" type="primary">azoR</name>
    <name type="ordered locus">MMOB3510</name>
</gene>
<sequence>MKIQKVLVIKSSMTENLPSGSFSSALSDKFMEYYRKENPIDKIIELNLNDQKDLISLSSQNFNTFFTDGVSDKYIDQLKSVDKVVISSPMTNFNYTALLKNYLDRILVANKTFSYKYSKKGEAIGLLPHLKVQILTTQGAPLGWYTWGDHTKNLEGTFEFIGAKVAKSVVMDGLKTPQYSSLKAPEALDLFDKVIKTAAENF</sequence>
<name>AZOR_MYCM1</name>
<organism>
    <name type="scientific">Mycoplasma mobile (strain ATCC 43663 / 163K / NCTC 11711)</name>
    <name type="common">Mesomycoplasma mobile</name>
    <dbReference type="NCBI Taxonomy" id="267748"/>
    <lineage>
        <taxon>Bacteria</taxon>
        <taxon>Bacillati</taxon>
        <taxon>Mycoplasmatota</taxon>
        <taxon>Mycoplasmoidales</taxon>
        <taxon>Metamycoplasmataceae</taxon>
        <taxon>Mesomycoplasma</taxon>
    </lineage>
</organism>
<accession>Q6KHU1</accession>
<reference key="1">
    <citation type="journal article" date="2004" name="Genome Res.">
        <title>The complete genome and proteome of Mycoplasma mobile.</title>
        <authorList>
            <person name="Jaffe J.D."/>
            <person name="Stange-Thomann N."/>
            <person name="Smith C."/>
            <person name="DeCaprio D."/>
            <person name="Fisher S."/>
            <person name="Butler J."/>
            <person name="Calvo S."/>
            <person name="Elkins T."/>
            <person name="FitzGerald M.G."/>
            <person name="Hafez N."/>
            <person name="Kodira C.D."/>
            <person name="Major J."/>
            <person name="Wang S."/>
            <person name="Wilkinson J."/>
            <person name="Nicol R."/>
            <person name="Nusbaum C."/>
            <person name="Birren B."/>
            <person name="Berg H.C."/>
            <person name="Church G.M."/>
        </authorList>
    </citation>
    <scope>NUCLEOTIDE SEQUENCE [LARGE SCALE GENOMIC DNA]</scope>
    <source>
        <strain>ATCC 43663 / NCTC 11711 / 163 K</strain>
    </source>
</reference>
<dbReference type="EC" id="1.6.5.-" evidence="1"/>
<dbReference type="EC" id="1.7.1.17" evidence="1"/>
<dbReference type="EMBL" id="AE017308">
    <property type="protein sequence ID" value="AAT27837.1"/>
    <property type="molecule type" value="Genomic_DNA"/>
</dbReference>
<dbReference type="RefSeq" id="WP_011264871.1">
    <property type="nucleotide sequence ID" value="NC_006908.1"/>
</dbReference>
<dbReference type="SMR" id="Q6KHU1"/>
<dbReference type="STRING" id="267748.MMOB3510"/>
<dbReference type="KEGG" id="mmo:MMOB3510"/>
<dbReference type="eggNOG" id="COG1182">
    <property type="taxonomic scope" value="Bacteria"/>
</dbReference>
<dbReference type="HOGENOM" id="CLU_088964_2_0_14"/>
<dbReference type="OrthoDB" id="9805013at2"/>
<dbReference type="Proteomes" id="UP000009072">
    <property type="component" value="Chromosome"/>
</dbReference>
<dbReference type="GO" id="GO:0009055">
    <property type="term" value="F:electron transfer activity"/>
    <property type="evidence" value="ECO:0007669"/>
    <property type="project" value="UniProtKB-UniRule"/>
</dbReference>
<dbReference type="GO" id="GO:0010181">
    <property type="term" value="F:FMN binding"/>
    <property type="evidence" value="ECO:0007669"/>
    <property type="project" value="UniProtKB-UniRule"/>
</dbReference>
<dbReference type="GO" id="GO:0016652">
    <property type="term" value="F:oxidoreductase activity, acting on NAD(P)H as acceptor"/>
    <property type="evidence" value="ECO:0007669"/>
    <property type="project" value="UniProtKB-UniRule"/>
</dbReference>
<dbReference type="GO" id="GO:0016655">
    <property type="term" value="F:oxidoreductase activity, acting on NAD(P)H, quinone or similar compound as acceptor"/>
    <property type="evidence" value="ECO:0007669"/>
    <property type="project" value="InterPro"/>
</dbReference>
<dbReference type="Gene3D" id="3.40.50.360">
    <property type="match status" value="1"/>
</dbReference>
<dbReference type="HAMAP" id="MF_01216">
    <property type="entry name" value="Azoreductase_type1"/>
    <property type="match status" value="1"/>
</dbReference>
<dbReference type="InterPro" id="IPR003680">
    <property type="entry name" value="Flavodoxin_fold"/>
</dbReference>
<dbReference type="InterPro" id="IPR029039">
    <property type="entry name" value="Flavoprotein-like_sf"/>
</dbReference>
<dbReference type="InterPro" id="IPR050104">
    <property type="entry name" value="FMN-dep_NADH:Q_OxRdtase_AzoR1"/>
</dbReference>
<dbReference type="InterPro" id="IPR023048">
    <property type="entry name" value="NADH:quinone_OxRdtase_FMN_depd"/>
</dbReference>
<dbReference type="NCBIfam" id="NF002370">
    <property type="entry name" value="PRK01355.1"/>
    <property type="match status" value="1"/>
</dbReference>
<dbReference type="PANTHER" id="PTHR43741">
    <property type="entry name" value="FMN-DEPENDENT NADH-AZOREDUCTASE 1"/>
    <property type="match status" value="1"/>
</dbReference>
<dbReference type="PANTHER" id="PTHR43741:SF4">
    <property type="entry name" value="FMN-DEPENDENT NADH:QUINONE OXIDOREDUCTASE"/>
    <property type="match status" value="1"/>
</dbReference>
<dbReference type="Pfam" id="PF02525">
    <property type="entry name" value="Flavodoxin_2"/>
    <property type="match status" value="1"/>
</dbReference>
<dbReference type="SUPFAM" id="SSF52218">
    <property type="entry name" value="Flavoproteins"/>
    <property type="match status" value="1"/>
</dbReference>
<protein>
    <recommendedName>
        <fullName evidence="1">FMN-dependent NADH:quinone oxidoreductase</fullName>
        <ecNumber evidence="1">1.6.5.-</ecNumber>
    </recommendedName>
    <alternativeName>
        <fullName evidence="1">Azo-dye reductase</fullName>
    </alternativeName>
    <alternativeName>
        <fullName evidence="1">FMN-dependent NADH-azo compound oxidoreductase</fullName>
    </alternativeName>
    <alternativeName>
        <fullName evidence="1">FMN-dependent NADH-azoreductase</fullName>
        <ecNumber evidence="1">1.7.1.17</ecNumber>
    </alternativeName>
</protein>
<evidence type="ECO:0000255" key="1">
    <source>
        <dbReference type="HAMAP-Rule" id="MF_01216"/>
    </source>
</evidence>
<comment type="function">
    <text evidence="1">Quinone reductase that provides resistance to thiol-specific stress caused by electrophilic quinones.</text>
</comment>
<comment type="function">
    <text evidence="1">Also exhibits azoreductase activity. Catalyzes the reductive cleavage of the azo bond in aromatic azo compounds to the corresponding amines.</text>
</comment>
<comment type="catalytic activity">
    <reaction evidence="1">
        <text>2 a quinone + NADH + H(+) = 2 a 1,4-benzosemiquinone + NAD(+)</text>
        <dbReference type="Rhea" id="RHEA:65952"/>
        <dbReference type="ChEBI" id="CHEBI:15378"/>
        <dbReference type="ChEBI" id="CHEBI:57540"/>
        <dbReference type="ChEBI" id="CHEBI:57945"/>
        <dbReference type="ChEBI" id="CHEBI:132124"/>
        <dbReference type="ChEBI" id="CHEBI:134225"/>
    </reaction>
</comment>
<comment type="catalytic activity">
    <reaction evidence="1">
        <text>N,N-dimethyl-1,4-phenylenediamine + anthranilate + 2 NAD(+) = 2-(4-dimethylaminophenyl)diazenylbenzoate + 2 NADH + 2 H(+)</text>
        <dbReference type="Rhea" id="RHEA:55872"/>
        <dbReference type="ChEBI" id="CHEBI:15378"/>
        <dbReference type="ChEBI" id="CHEBI:15783"/>
        <dbReference type="ChEBI" id="CHEBI:16567"/>
        <dbReference type="ChEBI" id="CHEBI:57540"/>
        <dbReference type="ChEBI" id="CHEBI:57945"/>
        <dbReference type="ChEBI" id="CHEBI:71579"/>
        <dbReference type="EC" id="1.7.1.17"/>
    </reaction>
</comment>
<comment type="cofactor">
    <cofactor evidence="1">
        <name>FMN</name>
        <dbReference type="ChEBI" id="CHEBI:58210"/>
    </cofactor>
    <text evidence="1">Binds 1 FMN per subunit.</text>
</comment>
<comment type="subunit">
    <text evidence="1">Homodimer.</text>
</comment>
<comment type="similarity">
    <text evidence="1">Belongs to the azoreductase type 1 family.</text>
</comment>
<keyword id="KW-0285">Flavoprotein</keyword>
<keyword id="KW-0288">FMN</keyword>
<keyword id="KW-0520">NAD</keyword>
<keyword id="KW-0560">Oxidoreductase</keyword>
<keyword id="KW-1185">Reference proteome</keyword>
<proteinExistence type="inferred from homology"/>
<feature type="chain" id="PRO_0000245936" description="FMN-dependent NADH:quinone oxidoreductase">
    <location>
        <begin position="1"/>
        <end position="202"/>
    </location>
</feature>
<feature type="binding site" evidence="1">
    <location>
        <position position="12"/>
    </location>
    <ligand>
        <name>FMN</name>
        <dbReference type="ChEBI" id="CHEBI:58210"/>
    </ligand>
</feature>
<feature type="binding site" evidence="1">
    <location>
        <begin position="21"/>
        <end position="23"/>
    </location>
    <ligand>
        <name>FMN</name>
        <dbReference type="ChEBI" id="CHEBI:58210"/>
    </ligand>
</feature>